<sequence length="453" mass="50469">MTLPVVAIVGRPNVGKSTLVNRLTGERVAIVHDQPGVTRDRTYRPSFWQDRDFLVVDTGGLVFADDTEFLPLIRQQVVTALSEARVAILVVDGQQGITAADEEIAQWLRQQSLPVLVAVNKCESPQQGLAQGAEFWELGLGEPFPISAIHGNGTGELLDQVVSYLPPTDQQAGEEDIINVAIVGRPNVGKSSLLNAVVGEQRAIVSPISGTTRDAIDTLVERDGQRYRLIDTAGIRKQKNVDYGPEFFGINRAFKAIQRAEVVLLVLDALDGVTEQDQKLAGRIVDEGCACVIVVNKWDAVEKDSYTIYDYQHQVEQRLNFIGWSDHIFISAATGQRVEKIFERVHLAAEQHRRRVSTSVINEVLEDAVGWHSPPASRQGRQGKIYYGTQVSSQPPTIALFVNDPALFKDNYRKYIEGQFRKQLGFRGTPIRLLWRGKKVREAERKGVLVRDR</sequence>
<reference key="1">
    <citation type="journal article" date="2011" name="MBio">
        <title>Novel metabolic attributes of the genus Cyanothece, comprising a group of unicellular nitrogen-fixing Cyanobacteria.</title>
        <authorList>
            <person name="Bandyopadhyay A."/>
            <person name="Elvitigala T."/>
            <person name="Welsh E."/>
            <person name="Stockel J."/>
            <person name="Liberton M."/>
            <person name="Min H."/>
            <person name="Sherman L.A."/>
            <person name="Pakrasi H.B."/>
        </authorList>
    </citation>
    <scope>NUCLEOTIDE SEQUENCE [LARGE SCALE GENOMIC DNA]</scope>
    <source>
        <strain>PCC 7425 / ATCC 29141</strain>
    </source>
</reference>
<feature type="chain" id="PRO_1000124353" description="GTPase Der">
    <location>
        <begin position="1"/>
        <end position="453"/>
    </location>
</feature>
<feature type="domain" description="EngA-type G 1">
    <location>
        <begin position="4"/>
        <end position="169"/>
    </location>
</feature>
<feature type="domain" description="EngA-type G 2">
    <location>
        <begin position="178"/>
        <end position="353"/>
    </location>
</feature>
<feature type="domain" description="KH-like" evidence="1">
    <location>
        <begin position="354"/>
        <end position="439"/>
    </location>
</feature>
<feature type="binding site" evidence="1">
    <location>
        <begin position="10"/>
        <end position="17"/>
    </location>
    <ligand>
        <name>GTP</name>
        <dbReference type="ChEBI" id="CHEBI:37565"/>
        <label>1</label>
    </ligand>
</feature>
<feature type="binding site" evidence="1">
    <location>
        <begin position="57"/>
        <end position="61"/>
    </location>
    <ligand>
        <name>GTP</name>
        <dbReference type="ChEBI" id="CHEBI:37565"/>
        <label>1</label>
    </ligand>
</feature>
<feature type="binding site" evidence="1">
    <location>
        <begin position="120"/>
        <end position="123"/>
    </location>
    <ligand>
        <name>GTP</name>
        <dbReference type="ChEBI" id="CHEBI:37565"/>
        <label>1</label>
    </ligand>
</feature>
<feature type="binding site" evidence="1">
    <location>
        <begin position="184"/>
        <end position="191"/>
    </location>
    <ligand>
        <name>GTP</name>
        <dbReference type="ChEBI" id="CHEBI:37565"/>
        <label>2</label>
    </ligand>
</feature>
<feature type="binding site" evidence="1">
    <location>
        <begin position="231"/>
        <end position="235"/>
    </location>
    <ligand>
        <name>GTP</name>
        <dbReference type="ChEBI" id="CHEBI:37565"/>
        <label>2</label>
    </ligand>
</feature>
<feature type="binding site" evidence="1">
    <location>
        <begin position="296"/>
        <end position="299"/>
    </location>
    <ligand>
        <name>GTP</name>
        <dbReference type="ChEBI" id="CHEBI:37565"/>
        <label>2</label>
    </ligand>
</feature>
<comment type="function">
    <text evidence="1">GTPase that plays an essential role in the late steps of ribosome biogenesis.</text>
</comment>
<comment type="subunit">
    <text evidence="1">Associates with the 50S ribosomal subunit.</text>
</comment>
<comment type="similarity">
    <text evidence="1">Belongs to the TRAFAC class TrmE-Era-EngA-EngB-Septin-like GTPase superfamily. EngA (Der) GTPase family.</text>
</comment>
<dbReference type="EMBL" id="CP001344">
    <property type="protein sequence ID" value="ACL43931.1"/>
    <property type="molecule type" value="Genomic_DNA"/>
</dbReference>
<dbReference type="SMR" id="B8HQE1"/>
<dbReference type="STRING" id="395961.Cyan7425_1561"/>
<dbReference type="KEGG" id="cyn:Cyan7425_1561"/>
<dbReference type="eggNOG" id="COG1160">
    <property type="taxonomic scope" value="Bacteria"/>
</dbReference>
<dbReference type="HOGENOM" id="CLU_016077_6_2_3"/>
<dbReference type="OrthoDB" id="9805918at2"/>
<dbReference type="GO" id="GO:0016887">
    <property type="term" value="F:ATP hydrolysis activity"/>
    <property type="evidence" value="ECO:0007669"/>
    <property type="project" value="InterPro"/>
</dbReference>
<dbReference type="GO" id="GO:0005525">
    <property type="term" value="F:GTP binding"/>
    <property type="evidence" value="ECO:0007669"/>
    <property type="project" value="UniProtKB-UniRule"/>
</dbReference>
<dbReference type="GO" id="GO:0043022">
    <property type="term" value="F:ribosome binding"/>
    <property type="evidence" value="ECO:0007669"/>
    <property type="project" value="TreeGrafter"/>
</dbReference>
<dbReference type="GO" id="GO:0042254">
    <property type="term" value="P:ribosome biogenesis"/>
    <property type="evidence" value="ECO:0007669"/>
    <property type="project" value="UniProtKB-KW"/>
</dbReference>
<dbReference type="CDD" id="cd01894">
    <property type="entry name" value="EngA1"/>
    <property type="match status" value="1"/>
</dbReference>
<dbReference type="CDD" id="cd01895">
    <property type="entry name" value="EngA2"/>
    <property type="match status" value="1"/>
</dbReference>
<dbReference type="FunFam" id="3.30.300.20:FF:000004">
    <property type="entry name" value="GTPase Der"/>
    <property type="match status" value="1"/>
</dbReference>
<dbReference type="FunFam" id="3.40.50.300:FF:000040">
    <property type="entry name" value="GTPase Der"/>
    <property type="match status" value="1"/>
</dbReference>
<dbReference type="FunFam" id="3.40.50.300:FF:001185">
    <property type="entry name" value="GTPase Der"/>
    <property type="match status" value="1"/>
</dbReference>
<dbReference type="Gene3D" id="3.30.300.20">
    <property type="match status" value="1"/>
</dbReference>
<dbReference type="Gene3D" id="3.40.50.300">
    <property type="entry name" value="P-loop containing nucleotide triphosphate hydrolases"/>
    <property type="match status" value="2"/>
</dbReference>
<dbReference type="HAMAP" id="MF_00195">
    <property type="entry name" value="GTPase_Der"/>
    <property type="match status" value="1"/>
</dbReference>
<dbReference type="InterPro" id="IPR003593">
    <property type="entry name" value="AAA+_ATPase"/>
</dbReference>
<dbReference type="InterPro" id="IPR031166">
    <property type="entry name" value="G_ENGA"/>
</dbReference>
<dbReference type="InterPro" id="IPR006073">
    <property type="entry name" value="GTP-bd"/>
</dbReference>
<dbReference type="InterPro" id="IPR016484">
    <property type="entry name" value="GTPase_Der"/>
</dbReference>
<dbReference type="InterPro" id="IPR032859">
    <property type="entry name" value="KH_dom-like"/>
</dbReference>
<dbReference type="InterPro" id="IPR015946">
    <property type="entry name" value="KH_dom-like_a/b"/>
</dbReference>
<dbReference type="InterPro" id="IPR027417">
    <property type="entry name" value="P-loop_NTPase"/>
</dbReference>
<dbReference type="InterPro" id="IPR005225">
    <property type="entry name" value="Small_GTP-bd"/>
</dbReference>
<dbReference type="NCBIfam" id="TIGR03594">
    <property type="entry name" value="GTPase_EngA"/>
    <property type="match status" value="1"/>
</dbReference>
<dbReference type="NCBIfam" id="TIGR00231">
    <property type="entry name" value="small_GTP"/>
    <property type="match status" value="2"/>
</dbReference>
<dbReference type="PANTHER" id="PTHR43834">
    <property type="entry name" value="GTPASE DER"/>
    <property type="match status" value="1"/>
</dbReference>
<dbReference type="PANTHER" id="PTHR43834:SF6">
    <property type="entry name" value="GTPASE DER"/>
    <property type="match status" value="1"/>
</dbReference>
<dbReference type="Pfam" id="PF14714">
    <property type="entry name" value="KH_dom-like"/>
    <property type="match status" value="1"/>
</dbReference>
<dbReference type="Pfam" id="PF01926">
    <property type="entry name" value="MMR_HSR1"/>
    <property type="match status" value="2"/>
</dbReference>
<dbReference type="PIRSF" id="PIRSF006485">
    <property type="entry name" value="GTP-binding_EngA"/>
    <property type="match status" value="1"/>
</dbReference>
<dbReference type="PRINTS" id="PR00326">
    <property type="entry name" value="GTP1OBG"/>
</dbReference>
<dbReference type="SMART" id="SM00382">
    <property type="entry name" value="AAA"/>
    <property type="match status" value="2"/>
</dbReference>
<dbReference type="SUPFAM" id="SSF52540">
    <property type="entry name" value="P-loop containing nucleoside triphosphate hydrolases"/>
    <property type="match status" value="2"/>
</dbReference>
<dbReference type="PROSITE" id="PS51712">
    <property type="entry name" value="G_ENGA"/>
    <property type="match status" value="2"/>
</dbReference>
<keyword id="KW-0342">GTP-binding</keyword>
<keyword id="KW-0547">Nucleotide-binding</keyword>
<keyword id="KW-0677">Repeat</keyword>
<keyword id="KW-0690">Ribosome biogenesis</keyword>
<accession>B8HQE1</accession>
<evidence type="ECO:0000255" key="1">
    <source>
        <dbReference type="HAMAP-Rule" id="MF_00195"/>
    </source>
</evidence>
<organism>
    <name type="scientific">Cyanothece sp. (strain PCC 7425 / ATCC 29141)</name>
    <dbReference type="NCBI Taxonomy" id="395961"/>
    <lineage>
        <taxon>Bacteria</taxon>
        <taxon>Bacillati</taxon>
        <taxon>Cyanobacteriota</taxon>
        <taxon>Cyanophyceae</taxon>
        <taxon>Gomontiellales</taxon>
        <taxon>Cyanothecaceae</taxon>
        <taxon>Cyanothece</taxon>
    </lineage>
</organism>
<name>DER_CYAP4</name>
<proteinExistence type="inferred from homology"/>
<protein>
    <recommendedName>
        <fullName evidence="1">GTPase Der</fullName>
    </recommendedName>
    <alternativeName>
        <fullName evidence="1">GTP-binding protein EngA</fullName>
    </alternativeName>
</protein>
<gene>
    <name evidence="1" type="primary">der</name>
    <name type="synonym">engA</name>
    <name type="ordered locus">Cyan7425_1561</name>
</gene>